<comment type="function">
    <text evidence="1">Methyltransferase required for the conversion of demethylmenaquinol (DMKH2) to menaquinol (MKH2) and the conversion of 2-polyprenyl-6-methoxy-1,4-benzoquinol (DDMQH2) to 2-polyprenyl-3-methyl-6-methoxy-1,4-benzoquinol (DMQH2).</text>
</comment>
<comment type="catalytic activity">
    <reaction evidence="1">
        <text>a 2-demethylmenaquinol + S-adenosyl-L-methionine = a menaquinol + S-adenosyl-L-homocysteine + H(+)</text>
        <dbReference type="Rhea" id="RHEA:42640"/>
        <dbReference type="Rhea" id="RHEA-COMP:9539"/>
        <dbReference type="Rhea" id="RHEA-COMP:9563"/>
        <dbReference type="ChEBI" id="CHEBI:15378"/>
        <dbReference type="ChEBI" id="CHEBI:18151"/>
        <dbReference type="ChEBI" id="CHEBI:55437"/>
        <dbReference type="ChEBI" id="CHEBI:57856"/>
        <dbReference type="ChEBI" id="CHEBI:59789"/>
        <dbReference type="EC" id="2.1.1.163"/>
    </reaction>
</comment>
<comment type="catalytic activity">
    <reaction evidence="1">
        <text>a 2-methoxy-6-(all-trans-polyprenyl)benzene-1,4-diol + S-adenosyl-L-methionine = a 5-methoxy-2-methyl-3-(all-trans-polyprenyl)benzene-1,4-diol + S-adenosyl-L-homocysteine + H(+)</text>
        <dbReference type="Rhea" id="RHEA:28286"/>
        <dbReference type="Rhea" id="RHEA-COMP:10858"/>
        <dbReference type="Rhea" id="RHEA-COMP:10859"/>
        <dbReference type="ChEBI" id="CHEBI:15378"/>
        <dbReference type="ChEBI" id="CHEBI:57856"/>
        <dbReference type="ChEBI" id="CHEBI:59789"/>
        <dbReference type="ChEBI" id="CHEBI:84166"/>
        <dbReference type="ChEBI" id="CHEBI:84167"/>
        <dbReference type="EC" id="2.1.1.201"/>
    </reaction>
</comment>
<comment type="pathway">
    <text evidence="1">Quinol/quinone metabolism; menaquinone biosynthesis; menaquinol from 1,4-dihydroxy-2-naphthoate: step 2/2.</text>
</comment>
<comment type="pathway">
    <text evidence="1">Cofactor biosynthesis; ubiquinone biosynthesis.</text>
</comment>
<comment type="similarity">
    <text evidence="1">Belongs to the class I-like SAM-binding methyltransferase superfamily. MenG/UbiE family.</text>
</comment>
<accession>B5RFM8</accession>
<sequence>MVEDSQETTHFGFQTVAKEQKADMVAHVFHSVASKYDVMNDLMSFGIHRLWKRFTIDCSGVRRGQTVLDLAGGTGDLTAKFSRMVGETGKVILADINDSMLKMGREKLRNIGVIGNVEYVQANAEALPFPDNTFDCITISFGLRNVTEKEKALRSMFRVLKPGGRLLVLEFSKPIIEPLSKAYDAYSFHILPRIGSMVANDADSYRYLAESIRMHPDQDTLKAMMQDAGFESVDYYNLTAGVVALHRGYKF</sequence>
<keyword id="KW-0474">Menaquinone biosynthesis</keyword>
<keyword id="KW-0489">Methyltransferase</keyword>
<keyword id="KW-0949">S-adenosyl-L-methionine</keyword>
<keyword id="KW-0808">Transferase</keyword>
<keyword id="KW-0831">Ubiquinone biosynthesis</keyword>
<proteinExistence type="inferred from homology"/>
<protein>
    <recommendedName>
        <fullName evidence="1">Ubiquinone/menaquinone biosynthesis C-methyltransferase UbiE</fullName>
        <ecNumber evidence="1">2.1.1.163</ecNumber>
        <ecNumber evidence="1">2.1.1.201</ecNumber>
    </recommendedName>
    <alternativeName>
        <fullName evidence="1">2-methoxy-6-polyprenyl-1,4-benzoquinol methylase</fullName>
    </alternativeName>
    <alternativeName>
        <fullName evidence="1">Demethylmenaquinone methyltransferase</fullName>
    </alternativeName>
</protein>
<reference key="1">
    <citation type="journal article" date="2008" name="Genome Res.">
        <title>Comparative genome analysis of Salmonella enteritidis PT4 and Salmonella gallinarum 287/91 provides insights into evolutionary and host adaptation pathways.</title>
        <authorList>
            <person name="Thomson N.R."/>
            <person name="Clayton D.J."/>
            <person name="Windhorst D."/>
            <person name="Vernikos G."/>
            <person name="Davidson S."/>
            <person name="Churcher C."/>
            <person name="Quail M.A."/>
            <person name="Stevens M."/>
            <person name="Jones M.A."/>
            <person name="Watson M."/>
            <person name="Barron A."/>
            <person name="Layton A."/>
            <person name="Pickard D."/>
            <person name="Kingsley R.A."/>
            <person name="Bignell A."/>
            <person name="Clark L."/>
            <person name="Harris B."/>
            <person name="Ormond D."/>
            <person name="Abdellah Z."/>
            <person name="Brooks K."/>
            <person name="Cherevach I."/>
            <person name="Chillingworth T."/>
            <person name="Woodward J."/>
            <person name="Norberczak H."/>
            <person name="Lord A."/>
            <person name="Arrowsmith C."/>
            <person name="Jagels K."/>
            <person name="Moule S."/>
            <person name="Mungall K."/>
            <person name="Saunders M."/>
            <person name="Whitehead S."/>
            <person name="Chabalgoity J.A."/>
            <person name="Maskell D."/>
            <person name="Humphreys T."/>
            <person name="Roberts M."/>
            <person name="Barrow P.A."/>
            <person name="Dougan G."/>
            <person name="Parkhill J."/>
        </authorList>
    </citation>
    <scope>NUCLEOTIDE SEQUENCE [LARGE SCALE GENOMIC DNA]</scope>
    <source>
        <strain>287/91 / NCTC 13346</strain>
    </source>
</reference>
<organism>
    <name type="scientific">Salmonella gallinarum (strain 287/91 / NCTC 13346)</name>
    <dbReference type="NCBI Taxonomy" id="550538"/>
    <lineage>
        <taxon>Bacteria</taxon>
        <taxon>Pseudomonadati</taxon>
        <taxon>Pseudomonadota</taxon>
        <taxon>Gammaproteobacteria</taxon>
        <taxon>Enterobacterales</taxon>
        <taxon>Enterobacteriaceae</taxon>
        <taxon>Salmonella</taxon>
    </lineage>
</organism>
<feature type="chain" id="PRO_1000187805" description="Ubiquinone/menaquinone biosynthesis C-methyltransferase UbiE">
    <location>
        <begin position="1"/>
        <end position="251"/>
    </location>
</feature>
<feature type="binding site" evidence="1">
    <location>
        <position position="74"/>
    </location>
    <ligand>
        <name>S-adenosyl-L-methionine</name>
        <dbReference type="ChEBI" id="CHEBI:59789"/>
    </ligand>
</feature>
<feature type="binding site" evidence="1">
    <location>
        <position position="95"/>
    </location>
    <ligand>
        <name>S-adenosyl-L-methionine</name>
        <dbReference type="ChEBI" id="CHEBI:59789"/>
    </ligand>
</feature>
<feature type="binding site" evidence="1">
    <location>
        <begin position="123"/>
        <end position="124"/>
    </location>
    <ligand>
        <name>S-adenosyl-L-methionine</name>
        <dbReference type="ChEBI" id="CHEBI:59789"/>
    </ligand>
</feature>
<feature type="binding site" evidence="1">
    <location>
        <position position="140"/>
    </location>
    <ligand>
        <name>S-adenosyl-L-methionine</name>
        <dbReference type="ChEBI" id="CHEBI:59789"/>
    </ligand>
</feature>
<name>UBIE_SALG2</name>
<gene>
    <name evidence="1" type="primary">ubiE</name>
    <name type="ordered locus">SG3481</name>
</gene>
<evidence type="ECO:0000255" key="1">
    <source>
        <dbReference type="HAMAP-Rule" id="MF_01813"/>
    </source>
</evidence>
<dbReference type="EC" id="2.1.1.163" evidence="1"/>
<dbReference type="EC" id="2.1.1.201" evidence="1"/>
<dbReference type="EMBL" id="AM933173">
    <property type="protein sequence ID" value="CAR39271.1"/>
    <property type="molecule type" value="Genomic_DNA"/>
</dbReference>
<dbReference type="RefSeq" id="WP_000229009.1">
    <property type="nucleotide sequence ID" value="NC_011274.1"/>
</dbReference>
<dbReference type="SMR" id="B5RFM8"/>
<dbReference type="KEGG" id="seg:SG3481"/>
<dbReference type="HOGENOM" id="CLU_037990_0_0_6"/>
<dbReference type="UniPathway" id="UPA00079">
    <property type="reaction ID" value="UER00169"/>
</dbReference>
<dbReference type="UniPathway" id="UPA00232"/>
<dbReference type="Proteomes" id="UP000008321">
    <property type="component" value="Chromosome"/>
</dbReference>
<dbReference type="GO" id="GO:0008425">
    <property type="term" value="F:2-methoxy-6-polyprenyl-1,4-benzoquinol methyltransferase activity"/>
    <property type="evidence" value="ECO:0007669"/>
    <property type="project" value="UniProtKB-UniRule"/>
</dbReference>
<dbReference type="GO" id="GO:0043770">
    <property type="term" value="F:demethylmenaquinone methyltransferase activity"/>
    <property type="evidence" value="ECO:0007669"/>
    <property type="project" value="UniProtKB-UniRule"/>
</dbReference>
<dbReference type="GO" id="GO:0009060">
    <property type="term" value="P:aerobic respiration"/>
    <property type="evidence" value="ECO:0007669"/>
    <property type="project" value="UniProtKB-UniRule"/>
</dbReference>
<dbReference type="GO" id="GO:0009234">
    <property type="term" value="P:menaquinone biosynthetic process"/>
    <property type="evidence" value="ECO:0007669"/>
    <property type="project" value="UniProtKB-UniRule"/>
</dbReference>
<dbReference type="GO" id="GO:0032259">
    <property type="term" value="P:methylation"/>
    <property type="evidence" value="ECO:0007669"/>
    <property type="project" value="UniProtKB-KW"/>
</dbReference>
<dbReference type="CDD" id="cd02440">
    <property type="entry name" value="AdoMet_MTases"/>
    <property type="match status" value="1"/>
</dbReference>
<dbReference type="FunFam" id="3.40.50.150:FF:000014">
    <property type="entry name" value="Ubiquinone/menaquinone biosynthesis C-methyltransferase UbiE"/>
    <property type="match status" value="1"/>
</dbReference>
<dbReference type="Gene3D" id="3.40.50.150">
    <property type="entry name" value="Vaccinia Virus protein VP39"/>
    <property type="match status" value="1"/>
</dbReference>
<dbReference type="HAMAP" id="MF_01813">
    <property type="entry name" value="MenG_UbiE_methyltr"/>
    <property type="match status" value="1"/>
</dbReference>
<dbReference type="InterPro" id="IPR029063">
    <property type="entry name" value="SAM-dependent_MTases_sf"/>
</dbReference>
<dbReference type="InterPro" id="IPR004033">
    <property type="entry name" value="UbiE/COQ5_MeTrFase"/>
</dbReference>
<dbReference type="InterPro" id="IPR023576">
    <property type="entry name" value="UbiE/COQ5_MeTrFase_CS"/>
</dbReference>
<dbReference type="NCBIfam" id="TIGR01934">
    <property type="entry name" value="MenG_MenH_UbiE"/>
    <property type="match status" value="1"/>
</dbReference>
<dbReference type="NCBIfam" id="NF001240">
    <property type="entry name" value="PRK00216.1-1"/>
    <property type="match status" value="1"/>
</dbReference>
<dbReference type="NCBIfam" id="NF001242">
    <property type="entry name" value="PRK00216.1-3"/>
    <property type="match status" value="1"/>
</dbReference>
<dbReference type="NCBIfam" id="NF001244">
    <property type="entry name" value="PRK00216.1-5"/>
    <property type="match status" value="1"/>
</dbReference>
<dbReference type="PANTHER" id="PTHR43591:SF24">
    <property type="entry name" value="2-METHOXY-6-POLYPRENYL-1,4-BENZOQUINOL METHYLASE, MITOCHONDRIAL"/>
    <property type="match status" value="1"/>
</dbReference>
<dbReference type="PANTHER" id="PTHR43591">
    <property type="entry name" value="METHYLTRANSFERASE"/>
    <property type="match status" value="1"/>
</dbReference>
<dbReference type="Pfam" id="PF01209">
    <property type="entry name" value="Ubie_methyltran"/>
    <property type="match status" value="1"/>
</dbReference>
<dbReference type="SUPFAM" id="SSF53335">
    <property type="entry name" value="S-adenosyl-L-methionine-dependent methyltransferases"/>
    <property type="match status" value="1"/>
</dbReference>
<dbReference type="PROSITE" id="PS51608">
    <property type="entry name" value="SAM_MT_UBIE"/>
    <property type="match status" value="1"/>
</dbReference>
<dbReference type="PROSITE" id="PS01183">
    <property type="entry name" value="UBIE_1"/>
    <property type="match status" value="1"/>
</dbReference>
<dbReference type="PROSITE" id="PS01184">
    <property type="entry name" value="UBIE_2"/>
    <property type="match status" value="1"/>
</dbReference>